<proteinExistence type="inferred from homology"/>
<protein>
    <recommendedName>
        <fullName evidence="1">Small ribosomal subunit protein uS4</fullName>
    </recommendedName>
    <alternativeName>
        <fullName evidence="2">30S ribosomal protein S4</fullName>
    </alternativeName>
</protein>
<evidence type="ECO:0000255" key="1">
    <source>
        <dbReference type="HAMAP-Rule" id="MF_01306"/>
    </source>
</evidence>
<evidence type="ECO:0000305" key="2"/>
<name>RS4_STRT1</name>
<organism>
    <name type="scientific">Streptococcus thermophilus (strain CNRZ 1066)</name>
    <dbReference type="NCBI Taxonomy" id="299768"/>
    <lineage>
        <taxon>Bacteria</taxon>
        <taxon>Bacillati</taxon>
        <taxon>Bacillota</taxon>
        <taxon>Bacilli</taxon>
        <taxon>Lactobacillales</taxon>
        <taxon>Streptococcaceae</taxon>
        <taxon>Streptococcus</taxon>
    </lineage>
</organism>
<sequence>MSRYTGPSWKQSRRLGFSLTGTGKELARRNYVPGQHGPNNRSKLSEYGLQLAEKQKLRFSYGLSEKQFRNLFVQATKVKGGTLGFNFMILLERRLDNVVYRLGLATTRRQARQFVNHGHILVDGKRVDIPSYRVEVGQVISVREKSAKVPAILEAVEATIGRPAFVSFDAEKLEGSLTRLPERDEINPEINEALVVEFYNKML</sequence>
<accession>Q5LXK5</accession>
<comment type="function">
    <text evidence="1">One of the primary rRNA binding proteins, it binds directly to 16S rRNA where it nucleates assembly of the body of the 30S subunit.</text>
</comment>
<comment type="function">
    <text evidence="1">With S5 and S12 plays an important role in translational accuracy.</text>
</comment>
<comment type="subunit">
    <text evidence="1">Part of the 30S ribosomal subunit. Contacts protein S5. The interaction surface between S4 and S5 is involved in control of translational fidelity.</text>
</comment>
<comment type="similarity">
    <text evidence="1">Belongs to the universal ribosomal protein uS4 family.</text>
</comment>
<comment type="sequence caution" evidence="2">
    <conflict type="erroneous initiation">
        <sequence resource="EMBL-CDS" id="AAV63507"/>
    </conflict>
</comment>
<feature type="chain" id="PRO_0000228931" description="Small ribosomal subunit protein uS4">
    <location>
        <begin position="1"/>
        <end position="203"/>
    </location>
</feature>
<feature type="domain" description="S4 RNA-binding" evidence="1">
    <location>
        <begin position="93"/>
        <end position="156"/>
    </location>
</feature>
<dbReference type="EMBL" id="CP000024">
    <property type="protein sequence ID" value="AAV63507.1"/>
    <property type="status" value="ALT_INIT"/>
    <property type="molecule type" value="Genomic_DNA"/>
</dbReference>
<dbReference type="RefSeq" id="WP_002952258.1">
    <property type="nucleotide sequence ID" value="NC_006449.1"/>
</dbReference>
<dbReference type="SMR" id="Q5LXK5"/>
<dbReference type="GeneID" id="66899723"/>
<dbReference type="KEGG" id="stc:str1997"/>
<dbReference type="HOGENOM" id="CLU_092403_0_1_9"/>
<dbReference type="GO" id="GO:0015935">
    <property type="term" value="C:small ribosomal subunit"/>
    <property type="evidence" value="ECO:0007669"/>
    <property type="project" value="InterPro"/>
</dbReference>
<dbReference type="GO" id="GO:0019843">
    <property type="term" value="F:rRNA binding"/>
    <property type="evidence" value="ECO:0007669"/>
    <property type="project" value="UniProtKB-UniRule"/>
</dbReference>
<dbReference type="GO" id="GO:0003735">
    <property type="term" value="F:structural constituent of ribosome"/>
    <property type="evidence" value="ECO:0007669"/>
    <property type="project" value="InterPro"/>
</dbReference>
<dbReference type="GO" id="GO:0042274">
    <property type="term" value="P:ribosomal small subunit biogenesis"/>
    <property type="evidence" value="ECO:0007669"/>
    <property type="project" value="TreeGrafter"/>
</dbReference>
<dbReference type="GO" id="GO:0006412">
    <property type="term" value="P:translation"/>
    <property type="evidence" value="ECO:0007669"/>
    <property type="project" value="UniProtKB-UniRule"/>
</dbReference>
<dbReference type="CDD" id="cd00165">
    <property type="entry name" value="S4"/>
    <property type="match status" value="1"/>
</dbReference>
<dbReference type="FunFam" id="1.10.1050.10:FF:000001">
    <property type="entry name" value="30S ribosomal protein S4"/>
    <property type="match status" value="1"/>
</dbReference>
<dbReference type="FunFam" id="3.10.290.10:FF:000001">
    <property type="entry name" value="30S ribosomal protein S4"/>
    <property type="match status" value="1"/>
</dbReference>
<dbReference type="Gene3D" id="1.10.1050.10">
    <property type="entry name" value="Ribosomal Protein S4 Delta 41, Chain A, domain 1"/>
    <property type="match status" value="1"/>
</dbReference>
<dbReference type="Gene3D" id="3.10.290.10">
    <property type="entry name" value="RNA-binding S4 domain"/>
    <property type="match status" value="1"/>
</dbReference>
<dbReference type="HAMAP" id="MF_01306_B">
    <property type="entry name" value="Ribosomal_uS4_B"/>
    <property type="match status" value="1"/>
</dbReference>
<dbReference type="InterPro" id="IPR022801">
    <property type="entry name" value="Ribosomal_uS4"/>
</dbReference>
<dbReference type="InterPro" id="IPR005709">
    <property type="entry name" value="Ribosomal_uS4_bac-type"/>
</dbReference>
<dbReference type="InterPro" id="IPR018079">
    <property type="entry name" value="Ribosomal_uS4_CS"/>
</dbReference>
<dbReference type="InterPro" id="IPR001912">
    <property type="entry name" value="Ribosomal_uS4_N"/>
</dbReference>
<dbReference type="InterPro" id="IPR002942">
    <property type="entry name" value="S4_RNA-bd"/>
</dbReference>
<dbReference type="InterPro" id="IPR036986">
    <property type="entry name" value="S4_RNA-bd_sf"/>
</dbReference>
<dbReference type="NCBIfam" id="NF003717">
    <property type="entry name" value="PRK05327.1"/>
    <property type="match status" value="1"/>
</dbReference>
<dbReference type="NCBIfam" id="TIGR01017">
    <property type="entry name" value="rpsD_bact"/>
    <property type="match status" value="1"/>
</dbReference>
<dbReference type="PANTHER" id="PTHR11831">
    <property type="entry name" value="30S 40S RIBOSOMAL PROTEIN"/>
    <property type="match status" value="1"/>
</dbReference>
<dbReference type="PANTHER" id="PTHR11831:SF4">
    <property type="entry name" value="SMALL RIBOSOMAL SUBUNIT PROTEIN US4M"/>
    <property type="match status" value="1"/>
</dbReference>
<dbReference type="Pfam" id="PF00163">
    <property type="entry name" value="Ribosomal_S4"/>
    <property type="match status" value="1"/>
</dbReference>
<dbReference type="Pfam" id="PF01479">
    <property type="entry name" value="S4"/>
    <property type="match status" value="1"/>
</dbReference>
<dbReference type="SMART" id="SM01390">
    <property type="entry name" value="Ribosomal_S4"/>
    <property type="match status" value="1"/>
</dbReference>
<dbReference type="SMART" id="SM00363">
    <property type="entry name" value="S4"/>
    <property type="match status" value="1"/>
</dbReference>
<dbReference type="SUPFAM" id="SSF55174">
    <property type="entry name" value="Alpha-L RNA-binding motif"/>
    <property type="match status" value="1"/>
</dbReference>
<dbReference type="PROSITE" id="PS00632">
    <property type="entry name" value="RIBOSOMAL_S4"/>
    <property type="match status" value="1"/>
</dbReference>
<dbReference type="PROSITE" id="PS50889">
    <property type="entry name" value="S4"/>
    <property type="match status" value="1"/>
</dbReference>
<keyword id="KW-0687">Ribonucleoprotein</keyword>
<keyword id="KW-0689">Ribosomal protein</keyword>
<keyword id="KW-0694">RNA-binding</keyword>
<keyword id="KW-0699">rRNA-binding</keyword>
<reference key="1">
    <citation type="journal article" date="2004" name="Nat. Biotechnol.">
        <title>Complete sequence and comparative genome analysis of the dairy bacterium Streptococcus thermophilus.</title>
        <authorList>
            <person name="Bolotin A."/>
            <person name="Quinquis B."/>
            <person name="Renault P."/>
            <person name="Sorokin A."/>
            <person name="Ehrlich S.D."/>
            <person name="Kulakauskas S."/>
            <person name="Lapidus A."/>
            <person name="Goltsman E."/>
            <person name="Mazur M."/>
            <person name="Pusch G.D."/>
            <person name="Fonstein M."/>
            <person name="Overbeek R."/>
            <person name="Kyprides N."/>
            <person name="Purnelle B."/>
            <person name="Prozzi D."/>
            <person name="Ngui K."/>
            <person name="Masuy D."/>
            <person name="Hancy F."/>
            <person name="Burteau S."/>
            <person name="Boutry M."/>
            <person name="Delcour J."/>
            <person name="Goffeau A."/>
            <person name="Hols P."/>
        </authorList>
    </citation>
    <scope>NUCLEOTIDE SEQUENCE [LARGE SCALE GENOMIC DNA]</scope>
    <source>
        <strain>CNRZ 1066</strain>
    </source>
</reference>
<gene>
    <name evidence="1" type="primary">rpsD</name>
    <name type="ordered locus">str1997</name>
</gene>